<dbReference type="EC" id="2.1.1.166" evidence="1"/>
<dbReference type="EMBL" id="AE017226">
    <property type="protein sequence ID" value="AAS12482.1"/>
    <property type="molecule type" value="Genomic_DNA"/>
</dbReference>
<dbReference type="RefSeq" id="NP_972571.1">
    <property type="nucleotide sequence ID" value="NC_002967.9"/>
</dbReference>
<dbReference type="RefSeq" id="WP_002669797.1">
    <property type="nucleotide sequence ID" value="NC_002967.9"/>
</dbReference>
<dbReference type="SMR" id="Q73L97"/>
<dbReference type="STRING" id="243275.TDE_1968"/>
<dbReference type="PaxDb" id="243275-TDE_1968"/>
<dbReference type="GeneID" id="2741531"/>
<dbReference type="KEGG" id="tde:TDE_1968"/>
<dbReference type="PATRIC" id="fig|243275.7.peg.1860"/>
<dbReference type="eggNOG" id="COG0293">
    <property type="taxonomic scope" value="Bacteria"/>
</dbReference>
<dbReference type="HOGENOM" id="CLU_009422_4_4_12"/>
<dbReference type="OrthoDB" id="154490at2"/>
<dbReference type="Proteomes" id="UP000008212">
    <property type="component" value="Chromosome"/>
</dbReference>
<dbReference type="GO" id="GO:0005737">
    <property type="term" value="C:cytoplasm"/>
    <property type="evidence" value="ECO:0007669"/>
    <property type="project" value="UniProtKB-SubCell"/>
</dbReference>
<dbReference type="GO" id="GO:0008650">
    <property type="term" value="F:rRNA (uridine-2'-O-)-methyltransferase activity"/>
    <property type="evidence" value="ECO:0007669"/>
    <property type="project" value="UniProtKB-UniRule"/>
</dbReference>
<dbReference type="Gene3D" id="3.40.50.150">
    <property type="entry name" value="Vaccinia Virus protein VP39"/>
    <property type="match status" value="1"/>
</dbReference>
<dbReference type="HAMAP" id="MF_01547">
    <property type="entry name" value="RNA_methyltr_E"/>
    <property type="match status" value="1"/>
</dbReference>
<dbReference type="InterPro" id="IPR050082">
    <property type="entry name" value="RNA_methyltr_RlmE"/>
</dbReference>
<dbReference type="InterPro" id="IPR002877">
    <property type="entry name" value="RNA_MeTrfase_FtsJ_dom"/>
</dbReference>
<dbReference type="InterPro" id="IPR015507">
    <property type="entry name" value="rRNA-MeTfrase_E"/>
</dbReference>
<dbReference type="InterPro" id="IPR029063">
    <property type="entry name" value="SAM-dependent_MTases_sf"/>
</dbReference>
<dbReference type="PANTHER" id="PTHR10920">
    <property type="entry name" value="RIBOSOMAL RNA METHYLTRANSFERASE"/>
    <property type="match status" value="1"/>
</dbReference>
<dbReference type="PANTHER" id="PTHR10920:SF18">
    <property type="entry name" value="RRNA METHYLTRANSFERASE 2, MITOCHONDRIAL"/>
    <property type="match status" value="1"/>
</dbReference>
<dbReference type="Pfam" id="PF01728">
    <property type="entry name" value="FtsJ"/>
    <property type="match status" value="1"/>
</dbReference>
<dbReference type="PIRSF" id="PIRSF005461">
    <property type="entry name" value="23S_rRNA_mtase"/>
    <property type="match status" value="1"/>
</dbReference>
<dbReference type="SUPFAM" id="SSF53335">
    <property type="entry name" value="S-adenosyl-L-methionine-dependent methyltransferases"/>
    <property type="match status" value="1"/>
</dbReference>
<name>RLME_TREDE</name>
<accession>Q73L97</accession>
<protein>
    <recommendedName>
        <fullName evidence="1">Ribosomal RNA large subunit methyltransferase E</fullName>
        <ecNumber evidence="1">2.1.1.166</ecNumber>
    </recommendedName>
    <alternativeName>
        <fullName evidence="1">23S rRNA Um2552 methyltransferase</fullName>
    </alternativeName>
    <alternativeName>
        <fullName evidence="1">rRNA (uridine-2'-O-)-methyltransferase</fullName>
    </alternativeName>
</protein>
<proteinExistence type="inferred from homology"/>
<organism>
    <name type="scientific">Treponema denticola (strain ATCC 35405 / DSM 14222 / CIP 103919 / JCM 8153 / KCTC 15104)</name>
    <dbReference type="NCBI Taxonomy" id="243275"/>
    <lineage>
        <taxon>Bacteria</taxon>
        <taxon>Pseudomonadati</taxon>
        <taxon>Spirochaetota</taxon>
        <taxon>Spirochaetia</taxon>
        <taxon>Spirochaetales</taxon>
        <taxon>Treponemataceae</taxon>
        <taxon>Treponema</taxon>
    </lineage>
</organism>
<comment type="function">
    <text evidence="1">Specifically methylates the uridine in position 2552 of 23S rRNA at the 2'-O position of the ribose in the fully assembled 50S ribosomal subunit.</text>
</comment>
<comment type="catalytic activity">
    <reaction evidence="1">
        <text>uridine(2552) in 23S rRNA + S-adenosyl-L-methionine = 2'-O-methyluridine(2552) in 23S rRNA + S-adenosyl-L-homocysteine + H(+)</text>
        <dbReference type="Rhea" id="RHEA:42720"/>
        <dbReference type="Rhea" id="RHEA-COMP:10202"/>
        <dbReference type="Rhea" id="RHEA-COMP:10203"/>
        <dbReference type="ChEBI" id="CHEBI:15378"/>
        <dbReference type="ChEBI" id="CHEBI:57856"/>
        <dbReference type="ChEBI" id="CHEBI:59789"/>
        <dbReference type="ChEBI" id="CHEBI:65315"/>
        <dbReference type="ChEBI" id="CHEBI:74478"/>
        <dbReference type="EC" id="2.1.1.166"/>
    </reaction>
</comment>
<comment type="subcellular location">
    <subcellularLocation>
        <location evidence="1">Cytoplasm</location>
    </subcellularLocation>
</comment>
<comment type="similarity">
    <text evidence="1">Belongs to the class I-like SAM-binding methyltransferase superfamily. RNA methyltransferase RlmE family.</text>
</comment>
<keyword id="KW-0963">Cytoplasm</keyword>
<keyword id="KW-0489">Methyltransferase</keyword>
<keyword id="KW-1185">Reference proteome</keyword>
<keyword id="KW-0698">rRNA processing</keyword>
<keyword id="KW-0949">S-adenosyl-L-methionine</keyword>
<keyword id="KW-0808">Transferase</keyword>
<gene>
    <name evidence="1" type="primary">rlmE</name>
    <name evidence="1" type="synonym">ftsJ</name>
    <name evidence="1" type="synonym">rrmJ</name>
    <name type="ordered locus">TDE_1968</name>
</gene>
<evidence type="ECO:0000255" key="1">
    <source>
        <dbReference type="HAMAP-Rule" id="MF_01547"/>
    </source>
</evidence>
<sequence>MAKNKYSEPDYWSKKAFAENYPARSVYKLEEMNKKFNLFSPNDKVLDLGAAPGSWTVYVLRFLNKEGRVTAVDLKPLDSSVYDERLNFFQGDMFDKGIIKSVKELGPYDAVICDAAPATTGNKTVDTARSSGLVELALYYAQEQLKQGGSFVVKIFQGGDQQIHLNNLRKCFKTARAFKPEACRSSSFETYLIGLDFKG</sequence>
<reference key="1">
    <citation type="journal article" date="2004" name="Proc. Natl. Acad. Sci. U.S.A.">
        <title>Comparison of the genome of the oral pathogen Treponema denticola with other spirochete genomes.</title>
        <authorList>
            <person name="Seshadri R."/>
            <person name="Myers G.S.A."/>
            <person name="Tettelin H."/>
            <person name="Eisen J.A."/>
            <person name="Heidelberg J.F."/>
            <person name="Dodson R.J."/>
            <person name="Davidsen T.M."/>
            <person name="DeBoy R.T."/>
            <person name="Fouts D.E."/>
            <person name="Haft D.H."/>
            <person name="Selengut J."/>
            <person name="Ren Q."/>
            <person name="Brinkac L.M."/>
            <person name="Madupu R."/>
            <person name="Kolonay J.F."/>
            <person name="Durkin S.A."/>
            <person name="Daugherty S.C."/>
            <person name="Shetty J."/>
            <person name="Shvartsbeyn A."/>
            <person name="Gebregeorgis E."/>
            <person name="Geer K."/>
            <person name="Tsegaye G."/>
            <person name="Malek J.A."/>
            <person name="Ayodeji B."/>
            <person name="Shatsman S."/>
            <person name="McLeod M.P."/>
            <person name="Smajs D."/>
            <person name="Howell J.K."/>
            <person name="Pal S."/>
            <person name="Amin A."/>
            <person name="Vashisth P."/>
            <person name="McNeill T.Z."/>
            <person name="Xiang Q."/>
            <person name="Sodergren E."/>
            <person name="Baca E."/>
            <person name="Weinstock G.M."/>
            <person name="Norris S.J."/>
            <person name="Fraser C.M."/>
            <person name="Paulsen I.T."/>
        </authorList>
    </citation>
    <scope>NUCLEOTIDE SEQUENCE [LARGE SCALE GENOMIC DNA]</scope>
    <source>
        <strain>ATCC 35405 / DSM 14222 / CIP 103919 / JCM 8153 / KCTC 15104</strain>
    </source>
</reference>
<feature type="chain" id="PRO_0000155544" description="Ribosomal RNA large subunit methyltransferase E">
    <location>
        <begin position="1"/>
        <end position="199"/>
    </location>
</feature>
<feature type="active site" description="Proton acceptor" evidence="1">
    <location>
        <position position="154"/>
    </location>
</feature>
<feature type="binding site" evidence="1">
    <location>
        <position position="53"/>
    </location>
    <ligand>
        <name>S-adenosyl-L-methionine</name>
        <dbReference type="ChEBI" id="CHEBI:59789"/>
    </ligand>
</feature>
<feature type="binding site" evidence="1">
    <location>
        <position position="55"/>
    </location>
    <ligand>
        <name>S-adenosyl-L-methionine</name>
        <dbReference type="ChEBI" id="CHEBI:59789"/>
    </ligand>
</feature>
<feature type="binding site" evidence="1">
    <location>
        <position position="73"/>
    </location>
    <ligand>
        <name>S-adenosyl-L-methionine</name>
        <dbReference type="ChEBI" id="CHEBI:59789"/>
    </ligand>
</feature>
<feature type="binding site" evidence="1">
    <location>
        <position position="92"/>
    </location>
    <ligand>
        <name>S-adenosyl-L-methionine</name>
        <dbReference type="ChEBI" id="CHEBI:59789"/>
    </ligand>
</feature>
<feature type="binding site" evidence="1">
    <location>
        <position position="114"/>
    </location>
    <ligand>
        <name>S-adenosyl-L-methionine</name>
        <dbReference type="ChEBI" id="CHEBI:59789"/>
    </ligand>
</feature>